<reference key="1">
    <citation type="journal article" date="2000" name="Nature">
        <title>Sequence and analysis of chromosome 1 of the plant Arabidopsis thaliana.</title>
        <authorList>
            <person name="Theologis A."/>
            <person name="Ecker J.R."/>
            <person name="Palm C.J."/>
            <person name="Federspiel N.A."/>
            <person name="Kaul S."/>
            <person name="White O."/>
            <person name="Alonso J."/>
            <person name="Altafi H."/>
            <person name="Araujo R."/>
            <person name="Bowman C.L."/>
            <person name="Brooks S.Y."/>
            <person name="Buehler E."/>
            <person name="Chan A."/>
            <person name="Chao Q."/>
            <person name="Chen H."/>
            <person name="Cheuk R.F."/>
            <person name="Chin C.W."/>
            <person name="Chung M.K."/>
            <person name="Conn L."/>
            <person name="Conway A.B."/>
            <person name="Conway A.R."/>
            <person name="Creasy T.H."/>
            <person name="Dewar K."/>
            <person name="Dunn P."/>
            <person name="Etgu P."/>
            <person name="Feldblyum T.V."/>
            <person name="Feng J.-D."/>
            <person name="Fong B."/>
            <person name="Fujii C.Y."/>
            <person name="Gill J.E."/>
            <person name="Goldsmith A.D."/>
            <person name="Haas B."/>
            <person name="Hansen N.F."/>
            <person name="Hughes B."/>
            <person name="Huizar L."/>
            <person name="Hunter J.L."/>
            <person name="Jenkins J."/>
            <person name="Johnson-Hopson C."/>
            <person name="Khan S."/>
            <person name="Khaykin E."/>
            <person name="Kim C.J."/>
            <person name="Koo H.L."/>
            <person name="Kremenetskaia I."/>
            <person name="Kurtz D.B."/>
            <person name="Kwan A."/>
            <person name="Lam B."/>
            <person name="Langin-Hooper S."/>
            <person name="Lee A."/>
            <person name="Lee J.M."/>
            <person name="Lenz C.A."/>
            <person name="Li J.H."/>
            <person name="Li Y.-P."/>
            <person name="Lin X."/>
            <person name="Liu S.X."/>
            <person name="Liu Z.A."/>
            <person name="Luros J.S."/>
            <person name="Maiti R."/>
            <person name="Marziali A."/>
            <person name="Militscher J."/>
            <person name="Miranda M."/>
            <person name="Nguyen M."/>
            <person name="Nierman W.C."/>
            <person name="Osborne B.I."/>
            <person name="Pai G."/>
            <person name="Peterson J."/>
            <person name="Pham P.K."/>
            <person name="Rizzo M."/>
            <person name="Rooney T."/>
            <person name="Rowley D."/>
            <person name="Sakano H."/>
            <person name="Salzberg S.L."/>
            <person name="Schwartz J.R."/>
            <person name="Shinn P."/>
            <person name="Southwick A.M."/>
            <person name="Sun H."/>
            <person name="Tallon L.J."/>
            <person name="Tambunga G."/>
            <person name="Toriumi M.J."/>
            <person name="Town C.D."/>
            <person name="Utterback T."/>
            <person name="Van Aken S."/>
            <person name="Vaysberg M."/>
            <person name="Vysotskaia V.S."/>
            <person name="Walker M."/>
            <person name="Wu D."/>
            <person name="Yu G."/>
            <person name="Fraser C.M."/>
            <person name="Venter J.C."/>
            <person name="Davis R.W."/>
        </authorList>
    </citation>
    <scope>NUCLEOTIDE SEQUENCE [LARGE SCALE GENOMIC DNA]</scope>
    <source>
        <strain>cv. Columbia</strain>
    </source>
</reference>
<reference key="2">
    <citation type="journal article" date="2017" name="Plant J.">
        <title>Araport11: a complete reannotation of the Arabidopsis thaliana reference genome.</title>
        <authorList>
            <person name="Cheng C.Y."/>
            <person name="Krishnakumar V."/>
            <person name="Chan A.P."/>
            <person name="Thibaud-Nissen F."/>
            <person name="Schobel S."/>
            <person name="Town C.D."/>
        </authorList>
    </citation>
    <scope>GENOME REANNOTATION</scope>
    <source>
        <strain>cv. Columbia</strain>
    </source>
</reference>
<reference key="3">
    <citation type="journal article" date="2003" name="Science">
        <title>Empirical analysis of transcriptional activity in the Arabidopsis genome.</title>
        <authorList>
            <person name="Yamada K."/>
            <person name="Lim J."/>
            <person name="Dale J.M."/>
            <person name="Chen H."/>
            <person name="Shinn P."/>
            <person name="Palm C.J."/>
            <person name="Southwick A.M."/>
            <person name="Wu H.C."/>
            <person name="Kim C.J."/>
            <person name="Nguyen M."/>
            <person name="Pham P.K."/>
            <person name="Cheuk R.F."/>
            <person name="Karlin-Newmann G."/>
            <person name="Liu S.X."/>
            <person name="Lam B."/>
            <person name="Sakano H."/>
            <person name="Wu T."/>
            <person name="Yu G."/>
            <person name="Miranda M."/>
            <person name="Quach H.L."/>
            <person name="Tripp M."/>
            <person name="Chang C.H."/>
            <person name="Lee J.M."/>
            <person name="Toriumi M.J."/>
            <person name="Chan M.M."/>
            <person name="Tang C.C."/>
            <person name="Onodera C.S."/>
            <person name="Deng J.M."/>
            <person name="Akiyama K."/>
            <person name="Ansari Y."/>
            <person name="Arakawa T."/>
            <person name="Banh J."/>
            <person name="Banno F."/>
            <person name="Bowser L."/>
            <person name="Brooks S.Y."/>
            <person name="Carninci P."/>
            <person name="Chao Q."/>
            <person name="Choy N."/>
            <person name="Enju A."/>
            <person name="Goldsmith A.D."/>
            <person name="Gurjal M."/>
            <person name="Hansen N.F."/>
            <person name="Hayashizaki Y."/>
            <person name="Johnson-Hopson C."/>
            <person name="Hsuan V.W."/>
            <person name="Iida K."/>
            <person name="Karnes M."/>
            <person name="Khan S."/>
            <person name="Koesema E."/>
            <person name="Ishida J."/>
            <person name="Jiang P.X."/>
            <person name="Jones T."/>
            <person name="Kawai J."/>
            <person name="Kamiya A."/>
            <person name="Meyers C."/>
            <person name="Nakajima M."/>
            <person name="Narusaka M."/>
            <person name="Seki M."/>
            <person name="Sakurai T."/>
            <person name="Satou M."/>
            <person name="Tamse R."/>
            <person name="Vaysberg M."/>
            <person name="Wallender E.K."/>
            <person name="Wong C."/>
            <person name="Yamamura Y."/>
            <person name="Yuan S."/>
            <person name="Shinozaki K."/>
            <person name="Davis R.W."/>
            <person name="Theologis A."/>
            <person name="Ecker J.R."/>
        </authorList>
    </citation>
    <scope>NUCLEOTIDE SEQUENCE [LARGE SCALE MRNA] (ISOFORM 2)</scope>
    <source>
        <strain>cv. Columbia</strain>
    </source>
</reference>
<reference key="4">
    <citation type="journal article" date="2009" name="DNA Res.">
        <title>Analysis of multiple occurrences of alternative splicing events in Arabidopsis thaliana using novel sequenced full-length cDNAs.</title>
        <authorList>
            <person name="Iida K."/>
            <person name="Fukami-Kobayashi K."/>
            <person name="Toyoda A."/>
            <person name="Sakaki Y."/>
            <person name="Kobayashi M."/>
            <person name="Seki M."/>
            <person name="Shinozaki K."/>
        </authorList>
    </citation>
    <scope>NUCLEOTIDE SEQUENCE [LARGE SCALE MRNA] (ISOFORM 1)</scope>
    <source>
        <strain>cv. Columbia</strain>
    </source>
</reference>
<reference key="5">
    <citation type="submission" date="2002-03" db="EMBL/GenBank/DDBJ databases">
        <title>Full-length cDNA from Arabidopsis thaliana.</title>
        <authorList>
            <person name="Brover V.V."/>
            <person name="Troukhan M.E."/>
            <person name="Alexandrov N.A."/>
            <person name="Lu Y.-P."/>
            <person name="Flavell R.B."/>
            <person name="Feldmann K.A."/>
        </authorList>
    </citation>
    <scope>NUCLEOTIDE SEQUENCE [LARGE SCALE MRNA]</scope>
</reference>
<reference key="6">
    <citation type="journal article" date="2006" name="Plant Physiol.">
        <title>The evolutionarily conserved tetratrico peptide repeat protein pale yellow green7 is required for photosystem I accumulation in Arabidopsis and copurifies with the complex.</title>
        <authorList>
            <person name="Stoeckel J."/>
            <person name="Bennewitz S."/>
            <person name="Hein P."/>
            <person name="Oelmueller R."/>
        </authorList>
    </citation>
    <scope>FUNCTION</scope>
    <scope>SUBCELLULAR LOCATION</scope>
    <scope>INDUCTION BY LIGHT</scope>
    <scope>DISRUPTION PHENOTYPE</scope>
</reference>
<reference key="7">
    <citation type="journal article" date="2017" name="Plant Physiol.">
        <title>PSA3, a protein on the stromal face of the thylakoid membrane, promotes photosystem I accumulation in cooperation with the assembly factor PYG7.</title>
        <authorList>
            <person name="Shen J."/>
            <person name="Williams-Carrier R."/>
            <person name="Barkan A."/>
        </authorList>
    </citation>
    <scope>FUNCTION</scope>
    <scope>INTERACTION WITH PSA3</scope>
</reference>
<accession>B9DHG0</accession>
<accession>O80551</accession>
<accession>Q8LFF4</accession>
<accession>Q94EJ1</accession>
<dbReference type="EMBL" id="AC003979">
    <property type="protein sequence ID" value="AAC25516.1"/>
    <property type="status" value="ALT_SEQ"/>
    <property type="molecule type" value="Genomic_DNA"/>
</dbReference>
<dbReference type="EMBL" id="CP002684">
    <property type="protein sequence ID" value="AEE30273.1"/>
    <property type="molecule type" value="Genomic_DNA"/>
</dbReference>
<dbReference type="EMBL" id="CP002684">
    <property type="protein sequence ID" value="AEE30274.1"/>
    <property type="molecule type" value="Genomic_DNA"/>
</dbReference>
<dbReference type="EMBL" id="AF410279">
    <property type="protein sequence ID" value="AAK95265.1"/>
    <property type="molecule type" value="mRNA"/>
</dbReference>
<dbReference type="EMBL" id="BT001148">
    <property type="protein sequence ID" value="AAN64539.1"/>
    <property type="molecule type" value="mRNA"/>
</dbReference>
<dbReference type="EMBL" id="AK317512">
    <property type="protein sequence ID" value="BAH20177.1"/>
    <property type="molecule type" value="mRNA"/>
</dbReference>
<dbReference type="EMBL" id="AY084882">
    <property type="protein sequence ID" value="AAM61445.1"/>
    <property type="molecule type" value="mRNA"/>
</dbReference>
<dbReference type="PIR" id="T00774">
    <property type="entry name" value="T00774"/>
</dbReference>
<dbReference type="RefSeq" id="NP_564178.2">
    <molecule id="B9DHG0-2"/>
    <property type="nucleotide sequence ID" value="NM_102117.5"/>
</dbReference>
<dbReference type="RefSeq" id="NP_850950.1">
    <molecule id="B9DHG0-1"/>
    <property type="nucleotide sequence ID" value="NM_180619.2"/>
</dbReference>
<dbReference type="SMR" id="B9DHG0"/>
<dbReference type="FunCoup" id="B9DHG0">
    <property type="interactions" value="1292"/>
</dbReference>
<dbReference type="STRING" id="3702.B9DHG0"/>
<dbReference type="iPTMnet" id="B9DHG0"/>
<dbReference type="PaxDb" id="3702-AT1G22700.1"/>
<dbReference type="ProteomicsDB" id="224796">
    <molecule id="B9DHG0-1"/>
</dbReference>
<dbReference type="EnsemblPlants" id="AT1G22700.1">
    <molecule id="B9DHG0-1"/>
    <property type="protein sequence ID" value="AT1G22700.1"/>
    <property type="gene ID" value="AT1G22700"/>
</dbReference>
<dbReference type="EnsemblPlants" id="AT1G22700.2">
    <molecule id="B9DHG0-2"/>
    <property type="protein sequence ID" value="AT1G22700.2"/>
    <property type="gene ID" value="AT1G22700"/>
</dbReference>
<dbReference type="GeneID" id="838876"/>
<dbReference type="Gramene" id="AT1G22700.1">
    <molecule id="B9DHG0-1"/>
    <property type="protein sequence ID" value="AT1G22700.1"/>
    <property type="gene ID" value="AT1G22700"/>
</dbReference>
<dbReference type="Gramene" id="AT1G22700.2">
    <molecule id="B9DHG0-2"/>
    <property type="protein sequence ID" value="AT1G22700.2"/>
    <property type="gene ID" value="AT1G22700"/>
</dbReference>
<dbReference type="KEGG" id="ath:AT1G22700"/>
<dbReference type="Araport" id="AT1G22700"/>
<dbReference type="TAIR" id="AT1G22700">
    <property type="gene designation" value="PYG7"/>
</dbReference>
<dbReference type="eggNOG" id="ENOG502QW5C">
    <property type="taxonomic scope" value="Eukaryota"/>
</dbReference>
<dbReference type="InParanoid" id="B9DHG0"/>
<dbReference type="OrthoDB" id="10006023at2759"/>
<dbReference type="PhylomeDB" id="B9DHG0"/>
<dbReference type="PRO" id="PR:B9DHG0"/>
<dbReference type="Proteomes" id="UP000006548">
    <property type="component" value="Chromosome 1"/>
</dbReference>
<dbReference type="ExpressionAtlas" id="B9DHG0">
    <property type="expression patterns" value="baseline and differential"/>
</dbReference>
<dbReference type="GO" id="GO:0009507">
    <property type="term" value="C:chloroplast"/>
    <property type="evidence" value="ECO:0007005"/>
    <property type="project" value="TAIR"/>
</dbReference>
<dbReference type="GO" id="GO:0009535">
    <property type="term" value="C:chloroplast thylakoid membrane"/>
    <property type="evidence" value="ECO:0007005"/>
    <property type="project" value="TAIR"/>
</dbReference>
<dbReference type="GO" id="GO:0005634">
    <property type="term" value="C:nucleus"/>
    <property type="evidence" value="ECO:0007005"/>
    <property type="project" value="TAIR"/>
</dbReference>
<dbReference type="GO" id="GO:0048564">
    <property type="term" value="P:photosystem I assembly"/>
    <property type="evidence" value="ECO:0000315"/>
    <property type="project" value="TAIR"/>
</dbReference>
<dbReference type="FunFam" id="1.25.40.10:FF:000616">
    <property type="entry name" value="Tetratricopeptide repeat-containing protein"/>
    <property type="match status" value="1"/>
</dbReference>
<dbReference type="Gene3D" id="1.25.40.10">
    <property type="entry name" value="Tetratricopeptide repeat domain"/>
    <property type="match status" value="1"/>
</dbReference>
<dbReference type="InterPro" id="IPR011990">
    <property type="entry name" value="TPR-like_helical_dom_sf"/>
</dbReference>
<dbReference type="InterPro" id="IPR019734">
    <property type="entry name" value="TPR_rpt"/>
</dbReference>
<dbReference type="Pfam" id="PF00515">
    <property type="entry name" value="TPR_1"/>
    <property type="match status" value="1"/>
</dbReference>
<dbReference type="Pfam" id="PF13181">
    <property type="entry name" value="TPR_8"/>
    <property type="match status" value="1"/>
</dbReference>
<dbReference type="SMART" id="SM00028">
    <property type="entry name" value="TPR"/>
    <property type="match status" value="2"/>
</dbReference>
<dbReference type="SUPFAM" id="SSF48452">
    <property type="entry name" value="TPR-like"/>
    <property type="match status" value="1"/>
</dbReference>
<dbReference type="PROSITE" id="PS50005">
    <property type="entry name" value="TPR"/>
    <property type="match status" value="3"/>
</dbReference>
<dbReference type="PROSITE" id="PS50293">
    <property type="entry name" value="TPR_REGION"/>
    <property type="match status" value="1"/>
</dbReference>
<name>PYG7_ARATH</name>
<proteinExistence type="evidence at protein level"/>
<evidence type="ECO:0000255" key="1"/>
<evidence type="ECO:0000255" key="2">
    <source>
        <dbReference type="PROSITE-ProRule" id="PRU00339"/>
    </source>
</evidence>
<evidence type="ECO:0000269" key="3">
    <source>
    </source>
</evidence>
<evidence type="ECO:0000269" key="4">
    <source>
    </source>
</evidence>
<evidence type="ECO:0000303" key="5">
    <source>
    </source>
</evidence>
<evidence type="ECO:0000305" key="6"/>
<evidence type="ECO:0000312" key="7">
    <source>
        <dbReference type="Araport" id="AT1G22700"/>
    </source>
</evidence>
<evidence type="ECO:0000312" key="8">
    <source>
        <dbReference type="EMBL" id="AAC25516.1"/>
    </source>
</evidence>
<gene>
    <name evidence="5" type="primary">PYG7</name>
    <name evidence="7" type="ordered locus">At1g22700</name>
    <name evidence="8" type="ORF">T22J18.13</name>
</gene>
<comment type="function">
    <text evidence="3 4">Nuclear genome-encoded factor required for the accumulation of photosystem I (PSI). Functions as a PSI biogenesis factor (PubMed:16679416, PubMed:28522455). Cooperates with PSA3 to promote the stable assembly of PSI in the thylakoid membrane. May target primarily the PsaC subunit (PubMed:28522455).</text>
</comment>
<comment type="subunit">
    <text evidence="4">Interacts with PSA3.</text>
</comment>
<comment type="subcellular location">
    <subcellularLocation>
        <location evidence="3">Plastid</location>
        <location evidence="3">Chloroplast thylakoid membrane</location>
        <topology evidence="1">Multi-pass membrane protein</topology>
    </subcellularLocation>
    <text evidence="3">Copurifies with PSI.</text>
</comment>
<comment type="alternative products">
    <event type="alternative splicing"/>
    <isoform>
        <id>B9DHG0-1</id>
        <name>1</name>
        <sequence type="displayed"/>
    </isoform>
    <isoform>
        <id>B9DHG0-2</id>
        <name>2</name>
        <sequence type="described" ref="VSP_059018"/>
    </isoform>
</comment>
<comment type="induction">
    <text evidence="3">Induced by light.</text>
</comment>
<comment type="disruption phenotype">
    <text evidence="3">Seedling lethality when homozygous. Dwarf and pale yellowish phenotype when grown on MS medium supplemented with 2% sucrose.</text>
</comment>
<comment type="sequence caution" evidence="6">
    <conflict type="erroneous gene model prediction">
        <sequence resource="EMBL-CDS" id="AAC25516"/>
    </conflict>
</comment>
<protein>
    <recommendedName>
        <fullName evidence="6">Tetratricopeptide repeat domain-containing protein PYG7, chloroplastic</fullName>
    </recommendedName>
    <alternativeName>
        <fullName evidence="5">Protein PALE YELLOW GREEN 7</fullName>
    </alternativeName>
</protein>
<organism>
    <name type="scientific">Arabidopsis thaliana</name>
    <name type="common">Mouse-ear cress</name>
    <dbReference type="NCBI Taxonomy" id="3702"/>
    <lineage>
        <taxon>Eukaryota</taxon>
        <taxon>Viridiplantae</taxon>
        <taxon>Streptophyta</taxon>
        <taxon>Embryophyta</taxon>
        <taxon>Tracheophyta</taxon>
        <taxon>Spermatophyta</taxon>
        <taxon>Magnoliopsida</taxon>
        <taxon>eudicotyledons</taxon>
        <taxon>Gunneridae</taxon>
        <taxon>Pentapetalae</taxon>
        <taxon>rosids</taxon>
        <taxon>malvids</taxon>
        <taxon>Brassicales</taxon>
        <taxon>Brassicaceae</taxon>
        <taxon>Camelineae</taxon>
        <taxon>Arabidopsis</taxon>
    </lineage>
</organism>
<feature type="transit peptide" description="Chloroplast" evidence="1">
    <location>
        <begin position="1"/>
        <end position="61"/>
    </location>
</feature>
<feature type="chain" id="PRO_0000440981" description="Tetratricopeptide repeat domain-containing protein PYG7, chloroplastic">
    <location>
        <begin position="62"/>
        <end position="301"/>
    </location>
</feature>
<feature type="transmembrane region" description="Helical" evidence="1">
    <location>
        <begin position="82"/>
        <end position="102"/>
    </location>
</feature>
<feature type="transmembrane region" description="Helical" evidence="1">
    <location>
        <begin position="121"/>
        <end position="141"/>
    </location>
</feature>
<feature type="repeat" description="TPR 1" evidence="1 2">
    <location>
        <begin position="168"/>
        <end position="201"/>
    </location>
</feature>
<feature type="repeat" description="TPR 2" evidence="1 2">
    <location>
        <begin position="206"/>
        <end position="239"/>
    </location>
</feature>
<feature type="repeat" description="TPR 3" evidence="2">
    <location>
        <begin position="240"/>
        <end position="273"/>
    </location>
</feature>
<feature type="splice variant" id="VSP_059018" description="In isoform 2.">
    <location>
        <begin position="54"/>
        <end position="58"/>
    </location>
</feature>
<feature type="sequence conflict" description="In Ref. 5; AAM61445." evidence="6" ref="5">
    <location>
        <position position="180"/>
    </location>
</feature>
<sequence>MFESNMVLQTLSSSSPPIHRLYLHHSQILPSSGSPSKISLQIHGRTLAIRSFHDYVFAEISARGLPALNKASLKKLPIKGSTFLLGQSLLMVSAHPQLAAAAEIIKPEPIYEVGELFELSIQLSYLLLLLGLLGVGTFYVIRQVLVRRELDLSAKELQEQVRSGDASATELFELGAVMLRRKFYPAANKFLQQAIQKWDGDDQDLAQVYNALGVSYVREDKLDKGIAQFEMAVKLQPGYVTAWNNLGDAYEKKKELPLALNAFEEVLLFDPNNKVARPRRDALKDRVKLYKGVVAVKSKKR</sequence>
<keyword id="KW-0025">Alternative splicing</keyword>
<keyword id="KW-0150">Chloroplast</keyword>
<keyword id="KW-0472">Membrane</keyword>
<keyword id="KW-0934">Plastid</keyword>
<keyword id="KW-1185">Reference proteome</keyword>
<keyword id="KW-0677">Repeat</keyword>
<keyword id="KW-0793">Thylakoid</keyword>
<keyword id="KW-0802">TPR repeat</keyword>
<keyword id="KW-0809">Transit peptide</keyword>
<keyword id="KW-0812">Transmembrane</keyword>
<keyword id="KW-1133">Transmembrane helix</keyword>